<proteinExistence type="inferred from homology"/>
<comment type="function">
    <text evidence="1">Required for the insertion and/or proper folding and/or complex formation of integral membrane proteins into the membrane. Involved in integration of membrane proteins that insert both dependently and independently of the Sec translocase complex, as well as at least some lipoproteins. Aids folding of multispanning membrane proteins.</text>
</comment>
<comment type="subunit">
    <text evidence="1">Interacts with the Sec translocase complex via SecD. Specifically interacts with transmembrane segments of nascent integral membrane proteins during membrane integration.</text>
</comment>
<comment type="subcellular location">
    <subcellularLocation>
        <location evidence="1">Cell inner membrane</location>
        <topology evidence="1">Multi-pass membrane protein</topology>
    </subcellularLocation>
</comment>
<comment type="similarity">
    <text evidence="1">Belongs to the OXA1/ALB3/YidC family. Type 1 subfamily.</text>
</comment>
<dbReference type="EMBL" id="CP000478">
    <property type="protein sequence ID" value="ABK18275.1"/>
    <property type="molecule type" value="Genomic_DNA"/>
</dbReference>
<dbReference type="RefSeq" id="WP_011699443.1">
    <property type="nucleotide sequence ID" value="NC_008554.1"/>
</dbReference>
<dbReference type="SMR" id="A0LLH3"/>
<dbReference type="FunCoup" id="A0LLH3">
    <property type="interactions" value="277"/>
</dbReference>
<dbReference type="STRING" id="335543.Sfum_2597"/>
<dbReference type="KEGG" id="sfu:Sfum_2597"/>
<dbReference type="eggNOG" id="COG0706">
    <property type="taxonomic scope" value="Bacteria"/>
</dbReference>
<dbReference type="HOGENOM" id="CLU_016535_3_0_7"/>
<dbReference type="InParanoid" id="A0LLH3"/>
<dbReference type="Proteomes" id="UP000001784">
    <property type="component" value="Chromosome"/>
</dbReference>
<dbReference type="GO" id="GO:0005886">
    <property type="term" value="C:plasma membrane"/>
    <property type="evidence" value="ECO:0007669"/>
    <property type="project" value="UniProtKB-SubCell"/>
</dbReference>
<dbReference type="GO" id="GO:0032977">
    <property type="term" value="F:membrane insertase activity"/>
    <property type="evidence" value="ECO:0007669"/>
    <property type="project" value="InterPro"/>
</dbReference>
<dbReference type="GO" id="GO:0051205">
    <property type="term" value="P:protein insertion into membrane"/>
    <property type="evidence" value="ECO:0007669"/>
    <property type="project" value="TreeGrafter"/>
</dbReference>
<dbReference type="GO" id="GO:0015031">
    <property type="term" value="P:protein transport"/>
    <property type="evidence" value="ECO:0007669"/>
    <property type="project" value="UniProtKB-KW"/>
</dbReference>
<dbReference type="CDD" id="cd20070">
    <property type="entry name" value="5TM_YidC_Alb3"/>
    <property type="match status" value="1"/>
</dbReference>
<dbReference type="CDD" id="cd19961">
    <property type="entry name" value="EcYidC-like_peri"/>
    <property type="match status" value="1"/>
</dbReference>
<dbReference type="Gene3D" id="2.70.98.90">
    <property type="match status" value="1"/>
</dbReference>
<dbReference type="HAMAP" id="MF_01810">
    <property type="entry name" value="YidC_type1"/>
    <property type="match status" value="1"/>
</dbReference>
<dbReference type="InterPro" id="IPR019998">
    <property type="entry name" value="Membr_insert_YidC"/>
</dbReference>
<dbReference type="InterPro" id="IPR028053">
    <property type="entry name" value="Membr_insert_YidC_N"/>
</dbReference>
<dbReference type="InterPro" id="IPR001708">
    <property type="entry name" value="YidC/ALB3/OXA1/COX18"/>
</dbReference>
<dbReference type="InterPro" id="IPR028055">
    <property type="entry name" value="YidC/Oxa/ALB_C"/>
</dbReference>
<dbReference type="InterPro" id="IPR047196">
    <property type="entry name" value="YidC_ALB_C"/>
</dbReference>
<dbReference type="InterPro" id="IPR038221">
    <property type="entry name" value="YidC_periplasmic_sf"/>
</dbReference>
<dbReference type="NCBIfam" id="NF002353">
    <property type="entry name" value="PRK01318.1-4"/>
    <property type="match status" value="1"/>
</dbReference>
<dbReference type="NCBIfam" id="TIGR03593">
    <property type="entry name" value="yidC_nterm"/>
    <property type="match status" value="1"/>
</dbReference>
<dbReference type="NCBIfam" id="TIGR03592">
    <property type="entry name" value="yidC_oxa1_cterm"/>
    <property type="match status" value="1"/>
</dbReference>
<dbReference type="PANTHER" id="PTHR12428:SF65">
    <property type="entry name" value="CYTOCHROME C OXIDASE ASSEMBLY PROTEIN COX18, MITOCHONDRIAL"/>
    <property type="match status" value="1"/>
</dbReference>
<dbReference type="PANTHER" id="PTHR12428">
    <property type="entry name" value="OXA1"/>
    <property type="match status" value="1"/>
</dbReference>
<dbReference type="Pfam" id="PF02096">
    <property type="entry name" value="60KD_IMP"/>
    <property type="match status" value="1"/>
</dbReference>
<dbReference type="Pfam" id="PF14849">
    <property type="entry name" value="YidC_periplas"/>
    <property type="match status" value="1"/>
</dbReference>
<dbReference type="PRINTS" id="PR00701">
    <property type="entry name" value="60KDINNERMP"/>
</dbReference>
<dbReference type="PRINTS" id="PR01900">
    <property type="entry name" value="YIDCPROTEIN"/>
</dbReference>
<accession>A0LLH3</accession>
<keyword id="KW-0997">Cell inner membrane</keyword>
<keyword id="KW-1003">Cell membrane</keyword>
<keyword id="KW-0143">Chaperone</keyword>
<keyword id="KW-0472">Membrane</keyword>
<keyword id="KW-0653">Protein transport</keyword>
<keyword id="KW-1185">Reference proteome</keyword>
<keyword id="KW-0812">Transmembrane</keyword>
<keyword id="KW-1133">Transmembrane helix</keyword>
<keyword id="KW-0813">Transport</keyword>
<gene>
    <name evidence="1" type="primary">yidC</name>
    <name type="ordered locus">Sfum_2597</name>
</gene>
<organism>
    <name type="scientific">Syntrophobacter fumaroxidans (strain DSM 10017 / MPOB)</name>
    <dbReference type="NCBI Taxonomy" id="335543"/>
    <lineage>
        <taxon>Bacteria</taxon>
        <taxon>Pseudomonadati</taxon>
        <taxon>Thermodesulfobacteriota</taxon>
        <taxon>Syntrophobacteria</taxon>
        <taxon>Syntrophobacterales</taxon>
        <taxon>Syntrophobacteraceae</taxon>
        <taxon>Syntrophobacter</taxon>
    </lineage>
</organism>
<evidence type="ECO:0000255" key="1">
    <source>
        <dbReference type="HAMAP-Rule" id="MF_01810"/>
    </source>
</evidence>
<evidence type="ECO:0000256" key="2">
    <source>
        <dbReference type="SAM" id="MobiDB-lite"/>
    </source>
</evidence>
<feature type="chain" id="PRO_1000070183" description="Membrane protein insertase YidC">
    <location>
        <begin position="1"/>
        <end position="553"/>
    </location>
</feature>
<feature type="transmembrane region" description="Helical" evidence="1">
    <location>
        <begin position="6"/>
        <end position="26"/>
    </location>
</feature>
<feature type="transmembrane region" description="Helical" evidence="1">
    <location>
        <begin position="331"/>
        <end position="351"/>
    </location>
</feature>
<feature type="transmembrane region" description="Helical" evidence="1">
    <location>
        <begin position="360"/>
        <end position="380"/>
    </location>
</feature>
<feature type="transmembrane region" description="Helical" evidence="1">
    <location>
        <begin position="424"/>
        <end position="444"/>
    </location>
</feature>
<feature type="transmembrane region" description="Helical" evidence="1">
    <location>
        <begin position="477"/>
        <end position="497"/>
    </location>
</feature>
<feature type="transmembrane region" description="Helical" evidence="1">
    <location>
        <begin position="512"/>
        <end position="532"/>
    </location>
</feature>
<feature type="region of interest" description="Disordered" evidence="2">
    <location>
        <begin position="34"/>
        <end position="59"/>
    </location>
</feature>
<feature type="compositionally biased region" description="Low complexity" evidence="2">
    <location>
        <begin position="38"/>
        <end position="59"/>
    </location>
</feature>
<sequence length="553" mass="63340">MEKRALIALVLSLLVLVFWEMYFGLFRMPAPPPNKTEQAAPTTTQPATPQTVPPQAATPQALPQDHVFRPDQQFQSWAIEDPLYRMNIIAPGARLSSFELKKHRKAVQPDSPPMQMVTSQTGGYLPMAIDLLHHQDWQLSTRPFFSEAGPKTVLEDKKPRVLSFSTEVPGKVRVTKSFTCSPESYLLDLEVQIGNLSSERLVDQMGISFYFLPFSPPEEESSYNPSQLTTLEKGSLKNFTTKDLSKSDLVLKPPMTWVAYENNFFINAIIPVAEGGYQFVPRILDATKGLLQLVYLTDPFQLEGNETKSFKLRFYIGPKELSTLARAEHQLASAVDYGWFTFIAKPLVYVLDWFYRYTHNWGVAIILLTIVIKILFWPLTQKSYQSMQKMKKIQPKMTQIREKYKGDREKMNQELMGLYRTYKVNPMGGCLPMLLQIPVFFALYRMLNGAVELRHEPFMLWIDDLTAPDRLPIGFDIPYLGGLPVLTLLMGITMFIQQKMTPSAGDPRQDQIMMIMPVMFTVFFVNFPSGLVLYWLVNNVLSIAQQYWVNRHA</sequence>
<reference key="1">
    <citation type="submission" date="2006-10" db="EMBL/GenBank/DDBJ databases">
        <title>Complete sequence of Syntrophobacter fumaroxidans MPOB.</title>
        <authorList>
            <consortium name="US DOE Joint Genome Institute"/>
            <person name="Copeland A."/>
            <person name="Lucas S."/>
            <person name="Lapidus A."/>
            <person name="Barry K."/>
            <person name="Detter J.C."/>
            <person name="Glavina del Rio T."/>
            <person name="Hammon N."/>
            <person name="Israni S."/>
            <person name="Pitluck S."/>
            <person name="Goltsman E.G."/>
            <person name="Martinez M."/>
            <person name="Schmutz J."/>
            <person name="Larimer F."/>
            <person name="Land M."/>
            <person name="Hauser L."/>
            <person name="Kyrpides N."/>
            <person name="Kim E."/>
            <person name="Boone D.R."/>
            <person name="Brockman F."/>
            <person name="Culley D."/>
            <person name="Ferry J."/>
            <person name="Gunsalus R."/>
            <person name="McInerney M.J."/>
            <person name="Morrison M."/>
            <person name="Plugge C."/>
            <person name="Rohlin L."/>
            <person name="Scholten J."/>
            <person name="Sieber J."/>
            <person name="Stams A.J.M."/>
            <person name="Worm P."/>
            <person name="Henstra A.M."/>
            <person name="Richardson P."/>
        </authorList>
    </citation>
    <scope>NUCLEOTIDE SEQUENCE [LARGE SCALE GENOMIC DNA]</scope>
    <source>
        <strain>DSM 10017 / MPOB</strain>
    </source>
</reference>
<name>YIDC_SYNFM</name>
<protein>
    <recommendedName>
        <fullName evidence="1">Membrane protein insertase YidC</fullName>
    </recommendedName>
    <alternativeName>
        <fullName evidence="1">Foldase YidC</fullName>
    </alternativeName>
    <alternativeName>
        <fullName evidence="1">Membrane integrase YidC</fullName>
    </alternativeName>
    <alternativeName>
        <fullName evidence="1">Membrane protein YidC</fullName>
    </alternativeName>
</protein>